<gene>
    <name evidence="8" type="primary">adnp2a</name>
</gene>
<reference key="1">
    <citation type="journal article" date="2013" name="Nature">
        <title>The zebrafish reference genome sequence and its relationship to the human genome.</title>
        <authorList>
            <person name="Howe K."/>
            <person name="Clark M.D."/>
            <person name="Torroja C.F."/>
            <person name="Torrance J."/>
            <person name="Berthelot C."/>
            <person name="Muffato M."/>
            <person name="Collins J.E."/>
            <person name="Humphray S."/>
            <person name="McLaren K."/>
            <person name="Matthews L."/>
            <person name="McLaren S."/>
            <person name="Sealy I."/>
            <person name="Caccamo M."/>
            <person name="Churcher C."/>
            <person name="Scott C."/>
            <person name="Barrett J.C."/>
            <person name="Koch R."/>
            <person name="Rauch G.J."/>
            <person name="White S."/>
            <person name="Chow W."/>
            <person name="Kilian B."/>
            <person name="Quintais L.T."/>
            <person name="Guerra-Assuncao J.A."/>
            <person name="Zhou Y."/>
            <person name="Gu Y."/>
            <person name="Yen J."/>
            <person name="Vogel J.H."/>
            <person name="Eyre T."/>
            <person name="Redmond S."/>
            <person name="Banerjee R."/>
            <person name="Chi J."/>
            <person name="Fu B."/>
            <person name="Langley E."/>
            <person name="Maguire S.F."/>
            <person name="Laird G.K."/>
            <person name="Lloyd D."/>
            <person name="Kenyon E."/>
            <person name="Donaldson S."/>
            <person name="Sehra H."/>
            <person name="Almeida-King J."/>
            <person name="Loveland J."/>
            <person name="Trevanion S."/>
            <person name="Jones M."/>
            <person name="Quail M."/>
            <person name="Willey D."/>
            <person name="Hunt A."/>
            <person name="Burton J."/>
            <person name="Sims S."/>
            <person name="McLay K."/>
            <person name="Plumb B."/>
            <person name="Davis J."/>
            <person name="Clee C."/>
            <person name="Oliver K."/>
            <person name="Clark R."/>
            <person name="Riddle C."/>
            <person name="Elliot D."/>
            <person name="Threadgold G."/>
            <person name="Harden G."/>
            <person name="Ware D."/>
            <person name="Begum S."/>
            <person name="Mortimore B."/>
            <person name="Kerry G."/>
            <person name="Heath P."/>
            <person name="Phillimore B."/>
            <person name="Tracey A."/>
            <person name="Corby N."/>
            <person name="Dunn M."/>
            <person name="Johnson C."/>
            <person name="Wood J."/>
            <person name="Clark S."/>
            <person name="Pelan S."/>
            <person name="Griffiths G."/>
            <person name="Smith M."/>
            <person name="Glithero R."/>
            <person name="Howden P."/>
            <person name="Barker N."/>
            <person name="Lloyd C."/>
            <person name="Stevens C."/>
            <person name="Harley J."/>
            <person name="Holt K."/>
            <person name="Panagiotidis G."/>
            <person name="Lovell J."/>
            <person name="Beasley H."/>
            <person name="Henderson C."/>
            <person name="Gordon D."/>
            <person name="Auger K."/>
            <person name="Wright D."/>
            <person name="Collins J."/>
            <person name="Raisen C."/>
            <person name="Dyer L."/>
            <person name="Leung K."/>
            <person name="Robertson L."/>
            <person name="Ambridge K."/>
            <person name="Leongamornlert D."/>
            <person name="McGuire S."/>
            <person name="Gilderthorp R."/>
            <person name="Griffiths C."/>
            <person name="Manthravadi D."/>
            <person name="Nichol S."/>
            <person name="Barker G."/>
            <person name="Whitehead S."/>
            <person name="Kay M."/>
            <person name="Brown J."/>
            <person name="Murnane C."/>
            <person name="Gray E."/>
            <person name="Humphries M."/>
            <person name="Sycamore N."/>
            <person name="Barker D."/>
            <person name="Saunders D."/>
            <person name="Wallis J."/>
            <person name="Babbage A."/>
            <person name="Hammond S."/>
            <person name="Mashreghi-Mohammadi M."/>
            <person name="Barr L."/>
            <person name="Martin S."/>
            <person name="Wray P."/>
            <person name="Ellington A."/>
            <person name="Matthews N."/>
            <person name="Ellwood M."/>
            <person name="Woodmansey R."/>
            <person name="Clark G."/>
            <person name="Cooper J."/>
            <person name="Tromans A."/>
            <person name="Grafham D."/>
            <person name="Skuce C."/>
            <person name="Pandian R."/>
            <person name="Andrews R."/>
            <person name="Harrison E."/>
            <person name="Kimberley A."/>
            <person name="Garnett J."/>
            <person name="Fosker N."/>
            <person name="Hall R."/>
            <person name="Garner P."/>
            <person name="Kelly D."/>
            <person name="Bird C."/>
            <person name="Palmer S."/>
            <person name="Gehring I."/>
            <person name="Berger A."/>
            <person name="Dooley C.M."/>
            <person name="Ersan-Urun Z."/>
            <person name="Eser C."/>
            <person name="Geiger H."/>
            <person name="Geisler M."/>
            <person name="Karotki L."/>
            <person name="Kirn A."/>
            <person name="Konantz J."/>
            <person name="Konantz M."/>
            <person name="Oberlander M."/>
            <person name="Rudolph-Geiger S."/>
            <person name="Teucke M."/>
            <person name="Lanz C."/>
            <person name="Raddatz G."/>
            <person name="Osoegawa K."/>
            <person name="Zhu B."/>
            <person name="Rapp A."/>
            <person name="Widaa S."/>
            <person name="Langford C."/>
            <person name="Yang F."/>
            <person name="Schuster S.C."/>
            <person name="Carter N.P."/>
            <person name="Harrow J."/>
            <person name="Ning Z."/>
            <person name="Herrero J."/>
            <person name="Searle S.M."/>
            <person name="Enright A."/>
            <person name="Geisler R."/>
            <person name="Plasterk R.H."/>
            <person name="Lee C."/>
            <person name="Westerfield M."/>
            <person name="de Jong P.J."/>
            <person name="Zon L.I."/>
            <person name="Postlethwait J.H."/>
            <person name="Nusslein-Volhard C."/>
            <person name="Hubbard T.J."/>
            <person name="Roest Crollius H."/>
            <person name="Rogers J."/>
            <person name="Stemple D.L."/>
        </authorList>
    </citation>
    <scope>NUCLEOTIDE SEQUENCE [LARGE SCALE GENOMIC DNA]</scope>
    <source>
        <strain>Tuebingen</strain>
    </source>
</reference>
<reference evidence="7" key="2">
    <citation type="submission" date="2007-04" db="EMBL/GenBank/DDBJ databases">
        <authorList>
            <consortium name="NIH - Zebrafish Gene Collection (ZGC) project"/>
        </authorList>
    </citation>
    <scope>NUCLEOTIDE SEQUENCE [LARGE SCALE MRNA]</scope>
    <source>
        <strain evidence="7">Singapore</strain>
        <tissue evidence="7">Embryo</tissue>
    </source>
</reference>
<reference evidence="6" key="3">
    <citation type="journal article" date="2012" name="J. Biol. Chem.">
        <title>Novel evolutionary-conserved role for the activity-dependent neuroprotective protein (ADNP) family that is important for erythropoiesis.</title>
        <authorList>
            <person name="Dresner E."/>
            <person name="Malishkevich A."/>
            <person name="Arviv C."/>
            <person name="Leibman Barak S."/>
            <person name="Alon S."/>
            <person name="Ofir R."/>
            <person name="Gothilf Y."/>
            <person name="Gozes I."/>
        </authorList>
    </citation>
    <scope>FUNCTION</scope>
    <scope>DEVELOPMENTAL STAGE</scope>
    <scope>DISRUPTION PHENOTYPE</scope>
</reference>
<name>ADN2A_DANRE</name>
<comment type="function">
    <text evidence="5">May be involved in transcriptional regulation (PubMed:23071114). Required for progression through late erythroid differentiation (PubMed:23071114). May be involved in vasculogenesis (PubMed:23071114).</text>
</comment>
<comment type="subcellular location">
    <subcellularLocation>
        <location evidence="3">Nucleus</location>
    </subcellularLocation>
</comment>
<comment type="developmental stage">
    <text evidence="5">Expressed from the 1-cell stage, before the onset of zygotic expression, then, during gastrulation, at 6 hours post-fertilization (hpf), expression is absent, and at 11-12 hpf, coincident with segmentation, expression returns until 72 hpf.</text>
</comment>
<comment type="disruption phenotype">
    <text evidence="5">Morpholino knockdown has no effect on overall morphology, and at the onset of blood circulation at 24 hours post-fertilization (hpf), blood cells are present, however between 33 and 48 hpf, blood cells are absent, and embryos develop cardiac edema (PubMed:23071114). Hemoglobin undetectable (PubMed:23071114). Some embryos recovered blood circulation at day 4 after knockdown, whereas others became severely edematous at day 4-5 and died by about 7 days (PubMed:23071114). At 28 and 48 hpf, expression of band3 almost abolished; embryonic alpha-globin1 also significantly reduced at 28 hpf (PubMed:23071114).</text>
</comment>
<proteinExistence type="evidence at transcript level"/>
<keyword id="KW-0238">DNA-binding</keyword>
<keyword id="KW-0371">Homeobox</keyword>
<keyword id="KW-0479">Metal-binding</keyword>
<keyword id="KW-0539">Nucleus</keyword>
<keyword id="KW-1185">Reference proteome</keyword>
<keyword id="KW-0677">Repeat</keyword>
<keyword id="KW-0804">Transcription</keyword>
<keyword id="KW-0805">Transcription regulation</keyword>
<keyword id="KW-0862">Zinc</keyword>
<keyword id="KW-0863">Zinc-finger</keyword>
<evidence type="ECO:0000250" key="1">
    <source>
        <dbReference type="UniProtKB" id="Q6IQ32"/>
    </source>
</evidence>
<evidence type="ECO:0000255" key="2"/>
<evidence type="ECO:0000255" key="3">
    <source>
        <dbReference type="PROSITE-ProRule" id="PRU00108"/>
    </source>
</evidence>
<evidence type="ECO:0000256" key="4">
    <source>
        <dbReference type="SAM" id="MobiDB-lite"/>
    </source>
</evidence>
<evidence type="ECO:0000269" key="5">
    <source>
    </source>
</evidence>
<evidence type="ECO:0000305" key="6"/>
<evidence type="ECO:0000312" key="7">
    <source>
        <dbReference type="EMBL" id="AAI39615.1"/>
    </source>
</evidence>
<evidence type="ECO:0000312" key="8">
    <source>
        <dbReference type="ZFIN" id="ZDB-GENE-040914-55"/>
    </source>
</evidence>
<accession>A4QP16</accession>
<accession>F1QAC9</accession>
<dbReference type="EMBL" id="CR391941">
    <property type="status" value="NOT_ANNOTATED_CDS"/>
    <property type="molecule type" value="Genomic_DNA"/>
</dbReference>
<dbReference type="EMBL" id="BC139614">
    <property type="protein sequence ID" value="AAI39615.1"/>
    <property type="molecule type" value="mRNA"/>
</dbReference>
<dbReference type="RefSeq" id="NP_001091735.1">
    <property type="nucleotide sequence ID" value="NM_001098265.1"/>
</dbReference>
<dbReference type="FunCoup" id="A4QP16">
    <property type="interactions" value="1285"/>
</dbReference>
<dbReference type="STRING" id="7955.ENSDARP00000080810"/>
<dbReference type="PaxDb" id="7955-ENSDARP00000080810"/>
<dbReference type="GeneID" id="100007394"/>
<dbReference type="KEGG" id="dre:100007394"/>
<dbReference type="AGR" id="ZFIN:ZDB-GENE-040914-55"/>
<dbReference type="CTD" id="100007394"/>
<dbReference type="ZFIN" id="ZDB-GENE-040914-55">
    <property type="gene designation" value="adnp2a"/>
</dbReference>
<dbReference type="eggNOG" id="ENOG502QU0M">
    <property type="taxonomic scope" value="Eukaryota"/>
</dbReference>
<dbReference type="HOGENOM" id="CLU_009119_1_0_1"/>
<dbReference type="OrthoDB" id="10053955at2759"/>
<dbReference type="PhylomeDB" id="A4QP16"/>
<dbReference type="TreeFam" id="TF328818"/>
<dbReference type="PRO" id="PR:A4QP16"/>
<dbReference type="Proteomes" id="UP000000437">
    <property type="component" value="Chromosome 16"/>
</dbReference>
<dbReference type="Bgee" id="ENSDARG00000060937">
    <property type="expression patterns" value="Expressed in blastula and 27 other cell types or tissues"/>
</dbReference>
<dbReference type="GO" id="GO:0005634">
    <property type="term" value="C:nucleus"/>
    <property type="evidence" value="ECO:0000318"/>
    <property type="project" value="GO_Central"/>
</dbReference>
<dbReference type="GO" id="GO:0003677">
    <property type="term" value="F:DNA binding"/>
    <property type="evidence" value="ECO:0007669"/>
    <property type="project" value="UniProtKB-KW"/>
</dbReference>
<dbReference type="GO" id="GO:0008270">
    <property type="term" value="F:zinc ion binding"/>
    <property type="evidence" value="ECO:0007669"/>
    <property type="project" value="UniProtKB-KW"/>
</dbReference>
<dbReference type="GO" id="GO:0043249">
    <property type="term" value="P:erythrocyte maturation"/>
    <property type="evidence" value="ECO:0000315"/>
    <property type="project" value="ZFIN"/>
</dbReference>
<dbReference type="GO" id="GO:0010468">
    <property type="term" value="P:regulation of gene expression"/>
    <property type="evidence" value="ECO:0000318"/>
    <property type="project" value="GO_Central"/>
</dbReference>
<dbReference type="InterPro" id="IPR038861">
    <property type="entry name" value="ADNP/ADNP2"/>
</dbReference>
<dbReference type="InterPro" id="IPR045762">
    <property type="entry name" value="ADNP_Znf"/>
</dbReference>
<dbReference type="InterPro" id="IPR013087">
    <property type="entry name" value="Znf_C2H2_type"/>
</dbReference>
<dbReference type="PANTHER" id="PTHR15740:SF2">
    <property type="entry name" value="ACTIVITY-DEPENDENT NEUROPROTECTOR HOMEOBOX PROTEIN 2"/>
    <property type="match status" value="1"/>
</dbReference>
<dbReference type="PANTHER" id="PTHR15740">
    <property type="entry name" value="NEUROPROTECTIVE PEPTIDE-CONTAINING PROTEIN"/>
    <property type="match status" value="1"/>
</dbReference>
<dbReference type="Pfam" id="PF19627">
    <property type="entry name" value="ADNP_N"/>
    <property type="match status" value="2"/>
</dbReference>
<dbReference type="SMART" id="SM00355">
    <property type="entry name" value="ZnF_C2H2"/>
    <property type="match status" value="6"/>
</dbReference>
<dbReference type="PROSITE" id="PS00028">
    <property type="entry name" value="ZINC_FINGER_C2H2_1"/>
    <property type="match status" value="2"/>
</dbReference>
<feature type="chain" id="PRO_0000456968" description="Activity-dependent neuroprotective protein 2a">
    <location>
        <begin position="1"/>
        <end position="962"/>
    </location>
</feature>
<feature type="zinc finger region" description="C2H2-type 1" evidence="2">
    <location>
        <begin position="75"/>
        <end position="98"/>
    </location>
</feature>
<feature type="zinc finger region" description="C2H2-type 2; degenerate" evidence="2">
    <location>
        <begin position="108"/>
        <end position="130"/>
    </location>
</feature>
<feature type="zinc finger region" description="C2H2-type 3; degenerate" evidence="2">
    <location>
        <begin position="165"/>
        <end position="188"/>
    </location>
</feature>
<feature type="zinc finger region" description="C2H2-type 4" evidence="2">
    <location>
        <begin position="219"/>
        <end position="244"/>
    </location>
</feature>
<feature type="zinc finger region" description="C2H2-type 5; degenerate" evidence="2">
    <location>
        <begin position="527"/>
        <end position="547"/>
    </location>
</feature>
<feature type="zinc finger region" description="C2H2-type 6" evidence="2">
    <location>
        <begin position="549"/>
        <end position="572"/>
    </location>
</feature>
<feature type="zinc finger region" description="C2H2-type 7" evidence="2">
    <location>
        <begin position="650"/>
        <end position="673"/>
    </location>
</feature>
<feature type="zinc finger region" description="C2H2-type 8; degenerate" evidence="2">
    <location>
        <begin position="688"/>
        <end position="712"/>
    </location>
</feature>
<feature type="DNA-binding region" description="Homeobox" evidence="2">
    <location>
        <begin position="795"/>
        <end position="854"/>
    </location>
</feature>
<feature type="region of interest" description="Disordered" evidence="4">
    <location>
        <begin position="753"/>
        <end position="781"/>
    </location>
</feature>
<feature type="sequence conflict" description="In Ref. 1; CR391941." evidence="6" ref="1">
    <original>M</original>
    <variation>I</variation>
    <location>
        <position position="290"/>
    </location>
</feature>
<feature type="sequence conflict" description="In Ref. 1; CR391941." evidence="6" ref="1">
    <original>H</original>
    <variation>R</variation>
    <location>
        <position position="416"/>
    </location>
</feature>
<feature type="sequence conflict" description="In Ref. 1; CR391941." evidence="6" ref="1">
    <original>F</original>
    <variation>L</variation>
    <location>
        <position position="444"/>
    </location>
</feature>
<feature type="sequence conflict" description="In Ref. 1; CR391941." evidence="6" ref="1">
    <original>V</original>
    <variation>I</variation>
    <location>
        <position position="720"/>
    </location>
</feature>
<feature type="sequence conflict" description="In Ref. 1; CR391941." evidence="6" ref="1">
    <original>L</original>
    <variation>P</variation>
    <location>
        <position position="783"/>
    </location>
</feature>
<feature type="sequence conflict" description="In Ref. 1; CR391941." evidence="6" ref="1">
    <original>P</original>
    <variation>Q</variation>
    <location>
        <position position="890"/>
    </location>
</feature>
<feature type="sequence conflict" description="In Ref. 1; CR391941." evidence="6" ref="1">
    <original>G</original>
    <variation>S</variation>
    <location>
        <position position="938"/>
    </location>
</feature>
<organism evidence="7">
    <name type="scientific">Danio rerio</name>
    <name type="common">Zebrafish</name>
    <name type="synonym">Brachydanio rerio</name>
    <dbReference type="NCBI Taxonomy" id="7955"/>
    <lineage>
        <taxon>Eukaryota</taxon>
        <taxon>Metazoa</taxon>
        <taxon>Chordata</taxon>
        <taxon>Craniata</taxon>
        <taxon>Vertebrata</taxon>
        <taxon>Euteleostomi</taxon>
        <taxon>Actinopterygii</taxon>
        <taxon>Neopterygii</taxon>
        <taxon>Teleostei</taxon>
        <taxon>Ostariophysi</taxon>
        <taxon>Cypriniformes</taxon>
        <taxon>Danionidae</taxon>
        <taxon>Danioninae</taxon>
        <taxon>Danio</taxon>
    </lineage>
</organism>
<protein>
    <recommendedName>
        <fullName evidence="1">Activity-dependent neuroprotective protein 2a</fullName>
    </recommendedName>
    <alternativeName>
        <fullName evidence="1">ADNP homeobox protein 2a</fullName>
    </alternativeName>
</protein>
<sequence>MYQIPVKNLTKLRRPRKRVKSILCDIGMQQCQDMLETYKCFDAGDASFDNTEWDDFTDGHVGKKKKKYPYRSQSLCCSLCWYSSRSVPTFRSHIHRCHWKNLDGACLLMCPYCPFVSSPKVTEQHIQFFHMLPSRAHQSHPSHTLAHTPKTISVTVSADAADDRYTCATCGYHDSLLYVMKKHVLVNHFATLLDRYFGLGSESAPMAGPQIRDGTPVKYHCKLCKLPAETIEHLLYHILSSEKHKELHWQIMPCIIEKECMNQMVGLQNLLNLAPKSMQPVTLFARPNYMPQQTQQTNGNGTVLLAGPSNAAALFCSPGAGQMFLSPQTQALLSGTTVAALQNAPHPQSPGGMSQVLPTSPVVKPLNMVMPNMPQNTPKTLPLTMTVPRLPPPQQGPQVLLPPGVQVNLPGEMGVHSPFLVTQGLQLNQSVPRAPLITSQSVRFIPTGNKVNGVPTYTLAPVQVTVPVHGGPPQMVLAQNQISQPPNSAVVTPGLMPPVQRAMNKNSRPNELAVQAPFLKKHDNQTVKCLRCKILLTEQGIFQHLLHGLKCLFCPQMFYSFKQIMEHSKKEHSLKVKDNRLYIKEQFSLDCDDEGNLIFSTFNLNTDVPKDLLDNRELNLALVTSTKDKIYIKMYPDKAEYTTMLKSAPNACPFCQVKLQNPEDYELHLQTKHHIVPTIHAILKTPAYKCIYCFGVYTEKSTPKTISIHVQRCRCAPKAVKEAERKLNPDTSESHDGDVCSSVQMPASEVTFQGAPEFPKPKKEAVTPRNRRRNTKASKTGTLVPETPVTLVLEPMGMERTSFEDRKDFLSQYFHRKPYVTKTEIELLASRLWINKADVKAHFNSKLTKCLKAIQKKRVCVRLGFKMIEVNKLKHNLFIPEVKPVKRKDPNEVNLSSLVPGVTVKTEQVDATTQHPLFIPEVPVTIKKEEEVCEIDHGFIIQEVTVKQEEVDEMEDALCTNG</sequence>